<gene>
    <name evidence="1" type="primary">aroK</name>
    <name type="ordered locus">ACIAD3354</name>
</gene>
<dbReference type="EC" id="2.7.1.71" evidence="1"/>
<dbReference type="EMBL" id="CR543861">
    <property type="protein sequence ID" value="CAG70021.1"/>
    <property type="molecule type" value="Genomic_DNA"/>
</dbReference>
<dbReference type="RefSeq" id="WP_004923733.1">
    <property type="nucleotide sequence ID" value="NC_005966.1"/>
</dbReference>
<dbReference type="SMR" id="Q6F7E4"/>
<dbReference type="STRING" id="202950.GCA_001485005_02193"/>
<dbReference type="GeneID" id="45235549"/>
<dbReference type="KEGG" id="aci:ACIAD3354"/>
<dbReference type="eggNOG" id="COG0703">
    <property type="taxonomic scope" value="Bacteria"/>
</dbReference>
<dbReference type="HOGENOM" id="CLU_057607_2_2_6"/>
<dbReference type="OrthoDB" id="9800332at2"/>
<dbReference type="BioCyc" id="ASP62977:ACIAD_RS15170-MONOMER"/>
<dbReference type="UniPathway" id="UPA00053">
    <property type="reaction ID" value="UER00088"/>
</dbReference>
<dbReference type="Proteomes" id="UP000000430">
    <property type="component" value="Chromosome"/>
</dbReference>
<dbReference type="GO" id="GO:0005829">
    <property type="term" value="C:cytosol"/>
    <property type="evidence" value="ECO:0007669"/>
    <property type="project" value="TreeGrafter"/>
</dbReference>
<dbReference type="GO" id="GO:0005524">
    <property type="term" value="F:ATP binding"/>
    <property type="evidence" value="ECO:0007669"/>
    <property type="project" value="UniProtKB-UniRule"/>
</dbReference>
<dbReference type="GO" id="GO:0000287">
    <property type="term" value="F:magnesium ion binding"/>
    <property type="evidence" value="ECO:0007669"/>
    <property type="project" value="UniProtKB-UniRule"/>
</dbReference>
<dbReference type="GO" id="GO:0004765">
    <property type="term" value="F:shikimate kinase activity"/>
    <property type="evidence" value="ECO:0007669"/>
    <property type="project" value="UniProtKB-UniRule"/>
</dbReference>
<dbReference type="GO" id="GO:0008652">
    <property type="term" value="P:amino acid biosynthetic process"/>
    <property type="evidence" value="ECO:0007669"/>
    <property type="project" value="UniProtKB-KW"/>
</dbReference>
<dbReference type="GO" id="GO:0009073">
    <property type="term" value="P:aromatic amino acid family biosynthetic process"/>
    <property type="evidence" value="ECO:0007669"/>
    <property type="project" value="UniProtKB-KW"/>
</dbReference>
<dbReference type="GO" id="GO:0009423">
    <property type="term" value="P:chorismate biosynthetic process"/>
    <property type="evidence" value="ECO:0007669"/>
    <property type="project" value="UniProtKB-UniRule"/>
</dbReference>
<dbReference type="CDD" id="cd00464">
    <property type="entry name" value="SK"/>
    <property type="match status" value="1"/>
</dbReference>
<dbReference type="Gene3D" id="3.40.50.300">
    <property type="entry name" value="P-loop containing nucleotide triphosphate hydrolases"/>
    <property type="match status" value="1"/>
</dbReference>
<dbReference type="HAMAP" id="MF_00109">
    <property type="entry name" value="Shikimate_kinase"/>
    <property type="match status" value="1"/>
</dbReference>
<dbReference type="InterPro" id="IPR027417">
    <property type="entry name" value="P-loop_NTPase"/>
</dbReference>
<dbReference type="InterPro" id="IPR031322">
    <property type="entry name" value="Shikimate/glucono_kinase"/>
</dbReference>
<dbReference type="InterPro" id="IPR000623">
    <property type="entry name" value="Shikimate_kinase/TSH1"/>
</dbReference>
<dbReference type="InterPro" id="IPR023000">
    <property type="entry name" value="Shikimate_kinase_CS"/>
</dbReference>
<dbReference type="NCBIfam" id="NF003456">
    <property type="entry name" value="PRK05057.1"/>
    <property type="match status" value="1"/>
</dbReference>
<dbReference type="PANTHER" id="PTHR21087">
    <property type="entry name" value="SHIKIMATE KINASE"/>
    <property type="match status" value="1"/>
</dbReference>
<dbReference type="PANTHER" id="PTHR21087:SF16">
    <property type="entry name" value="SHIKIMATE KINASE 1, CHLOROPLASTIC"/>
    <property type="match status" value="1"/>
</dbReference>
<dbReference type="Pfam" id="PF01202">
    <property type="entry name" value="SKI"/>
    <property type="match status" value="1"/>
</dbReference>
<dbReference type="PRINTS" id="PR01100">
    <property type="entry name" value="SHIKIMTKNASE"/>
</dbReference>
<dbReference type="SUPFAM" id="SSF52540">
    <property type="entry name" value="P-loop containing nucleoside triphosphate hydrolases"/>
    <property type="match status" value="1"/>
</dbReference>
<dbReference type="PROSITE" id="PS01128">
    <property type="entry name" value="SHIKIMATE_KINASE"/>
    <property type="match status" value="1"/>
</dbReference>
<evidence type="ECO:0000255" key="1">
    <source>
        <dbReference type="HAMAP-Rule" id="MF_00109"/>
    </source>
</evidence>
<protein>
    <recommendedName>
        <fullName evidence="1">Shikimate kinase</fullName>
        <shortName evidence="1">SK</shortName>
        <ecNumber evidence="1">2.7.1.71</ecNumber>
    </recommendedName>
</protein>
<sequence length="180" mass="20470">MPSKEFDTLPNIYLVGPMGAGKTTVGRHLAELLGREFLDSDHEIERRTGATIPWIFEKEGEIGFRSRETIVLDDLTSRRDLVLATGGGVVTQPANRSYLKTRGVVVYLYTPVELQLQRTYRDKNRPLLQVENPEQRLRDLLKLRDPLYRDVAHHIIETNQGAARELAQQILRVILSSGSH</sequence>
<comment type="function">
    <text evidence="1">Catalyzes the specific phosphorylation of the 3-hydroxyl group of shikimic acid using ATP as a cosubstrate.</text>
</comment>
<comment type="catalytic activity">
    <reaction evidence="1">
        <text>shikimate + ATP = 3-phosphoshikimate + ADP + H(+)</text>
        <dbReference type="Rhea" id="RHEA:13121"/>
        <dbReference type="ChEBI" id="CHEBI:15378"/>
        <dbReference type="ChEBI" id="CHEBI:30616"/>
        <dbReference type="ChEBI" id="CHEBI:36208"/>
        <dbReference type="ChEBI" id="CHEBI:145989"/>
        <dbReference type="ChEBI" id="CHEBI:456216"/>
        <dbReference type="EC" id="2.7.1.71"/>
    </reaction>
</comment>
<comment type="cofactor">
    <cofactor evidence="1">
        <name>Mg(2+)</name>
        <dbReference type="ChEBI" id="CHEBI:18420"/>
    </cofactor>
    <text evidence="1">Binds 1 Mg(2+) ion per subunit.</text>
</comment>
<comment type="pathway">
    <text evidence="1">Metabolic intermediate biosynthesis; chorismate biosynthesis; chorismate from D-erythrose 4-phosphate and phosphoenolpyruvate: step 5/7.</text>
</comment>
<comment type="subunit">
    <text evidence="1">Monomer.</text>
</comment>
<comment type="subcellular location">
    <subcellularLocation>
        <location evidence="1">Cytoplasm</location>
    </subcellularLocation>
</comment>
<comment type="similarity">
    <text evidence="1">Belongs to the shikimate kinase family.</text>
</comment>
<proteinExistence type="inferred from homology"/>
<reference key="1">
    <citation type="journal article" date="2004" name="Nucleic Acids Res.">
        <title>Unique features revealed by the genome sequence of Acinetobacter sp. ADP1, a versatile and naturally transformation competent bacterium.</title>
        <authorList>
            <person name="Barbe V."/>
            <person name="Vallenet D."/>
            <person name="Fonknechten N."/>
            <person name="Kreimeyer A."/>
            <person name="Oztas S."/>
            <person name="Labarre L."/>
            <person name="Cruveiller S."/>
            <person name="Robert C."/>
            <person name="Duprat S."/>
            <person name="Wincker P."/>
            <person name="Ornston L.N."/>
            <person name="Weissenbach J."/>
            <person name="Marliere P."/>
            <person name="Cohen G.N."/>
            <person name="Medigue C."/>
        </authorList>
    </citation>
    <scope>NUCLEOTIDE SEQUENCE [LARGE SCALE GENOMIC DNA]</scope>
    <source>
        <strain>ATCC 33305 / BD413 / ADP1</strain>
    </source>
</reference>
<accession>Q6F7E4</accession>
<keyword id="KW-0028">Amino-acid biosynthesis</keyword>
<keyword id="KW-0057">Aromatic amino acid biosynthesis</keyword>
<keyword id="KW-0067">ATP-binding</keyword>
<keyword id="KW-0963">Cytoplasm</keyword>
<keyword id="KW-0418">Kinase</keyword>
<keyword id="KW-0460">Magnesium</keyword>
<keyword id="KW-0479">Metal-binding</keyword>
<keyword id="KW-0547">Nucleotide-binding</keyword>
<keyword id="KW-0808">Transferase</keyword>
<feature type="chain" id="PRO_0000192364" description="Shikimate kinase">
    <location>
        <begin position="1"/>
        <end position="180"/>
    </location>
</feature>
<feature type="binding site" evidence="1">
    <location>
        <begin position="19"/>
        <end position="24"/>
    </location>
    <ligand>
        <name>ATP</name>
        <dbReference type="ChEBI" id="CHEBI:30616"/>
    </ligand>
</feature>
<feature type="binding site" evidence="1">
    <location>
        <position position="23"/>
    </location>
    <ligand>
        <name>Mg(2+)</name>
        <dbReference type="ChEBI" id="CHEBI:18420"/>
    </ligand>
</feature>
<feature type="binding site" evidence="1">
    <location>
        <position position="41"/>
    </location>
    <ligand>
        <name>substrate</name>
    </ligand>
</feature>
<feature type="binding site" evidence="1">
    <location>
        <position position="65"/>
    </location>
    <ligand>
        <name>substrate</name>
    </ligand>
</feature>
<feature type="binding site" evidence="1">
    <location>
        <position position="87"/>
    </location>
    <ligand>
        <name>substrate</name>
    </ligand>
</feature>
<feature type="binding site" evidence="1">
    <location>
        <position position="125"/>
    </location>
    <ligand>
        <name>ATP</name>
        <dbReference type="ChEBI" id="CHEBI:30616"/>
    </ligand>
</feature>
<feature type="binding site" evidence="1">
    <location>
        <position position="144"/>
    </location>
    <ligand>
        <name>substrate</name>
    </ligand>
</feature>
<name>AROK_ACIAD</name>
<organism>
    <name type="scientific">Acinetobacter baylyi (strain ATCC 33305 / BD413 / ADP1)</name>
    <dbReference type="NCBI Taxonomy" id="62977"/>
    <lineage>
        <taxon>Bacteria</taxon>
        <taxon>Pseudomonadati</taxon>
        <taxon>Pseudomonadota</taxon>
        <taxon>Gammaproteobacteria</taxon>
        <taxon>Moraxellales</taxon>
        <taxon>Moraxellaceae</taxon>
        <taxon>Acinetobacter</taxon>
    </lineage>
</organism>